<dbReference type="EMBL" id="AL123456">
    <property type="protein sequence ID" value="CCP44455.1"/>
    <property type="molecule type" value="Genomic_DNA"/>
</dbReference>
<dbReference type="RefSeq" id="NP_216206.1">
    <property type="nucleotide sequence ID" value="NC_000962.3"/>
</dbReference>
<dbReference type="RefSeq" id="WP_003408378.1">
    <property type="nucleotide sequence ID" value="NZ_NVQJ01000010.1"/>
</dbReference>
<dbReference type="STRING" id="83332.Rv1690"/>
<dbReference type="PaxDb" id="83332-Rv1690"/>
<dbReference type="DNASU" id="885670"/>
<dbReference type="GeneID" id="45425659"/>
<dbReference type="GeneID" id="885670"/>
<dbReference type="KEGG" id="mtu:Rv1690"/>
<dbReference type="KEGG" id="mtv:RVBD_1690"/>
<dbReference type="PATRIC" id="fig|83332.111.peg.1878"/>
<dbReference type="TubercuList" id="Rv1690"/>
<dbReference type="eggNOG" id="ENOG5032JRP">
    <property type="taxonomic scope" value="Bacteria"/>
</dbReference>
<dbReference type="HOGENOM" id="CLU_135573_3_1_11"/>
<dbReference type="InParanoid" id="O33192"/>
<dbReference type="OrthoDB" id="4743565at2"/>
<dbReference type="PhylomeDB" id="O33192"/>
<dbReference type="Proteomes" id="UP000001584">
    <property type="component" value="Chromosome"/>
</dbReference>
<dbReference type="GO" id="GO:0005886">
    <property type="term" value="C:plasma membrane"/>
    <property type="evidence" value="ECO:0000314"/>
    <property type="project" value="MTBBASE"/>
</dbReference>
<dbReference type="InterPro" id="IPR007969">
    <property type="entry name" value="DUF732"/>
</dbReference>
<dbReference type="Pfam" id="PF05305">
    <property type="entry name" value="DUF732"/>
    <property type="match status" value="1"/>
</dbReference>
<accession>O33192</accession>
<accession>F2GK47</accession>
<accession>I6X205</accession>
<accession>Q7D851</accession>
<name>LPRJ_MYCTU</name>
<protein>
    <recommendedName>
        <fullName>Putative lipoprotein LprJ</fullName>
    </recommendedName>
</protein>
<comment type="function">
    <text evidence="4">Overexpression induces expression of sensor protein kdpD gene at low K(+) concentrations (0 and 250 uM, tested in M.smegatis).</text>
</comment>
<comment type="subunit">
    <text evidence="6">May interact with sensor protein KdpD.</text>
</comment>
<comment type="subcellular location">
    <subcellularLocation>
        <location evidence="2 6">Cell membrane</location>
        <topology evidence="2">Single-pass membrane protein</topology>
    </subcellularLocation>
    <text evidence="5">Probably also has a lipid-anchor at the mature N-terminus. Has been suggested to have 2 transmembrane domains (PubMed:12581360), but bioinformatic evidence does not support this.</text>
</comment>
<comment type="PTM">
    <text evidence="1">Modified by Lgt on Cys-35 with an S-linked diacylglycerol, signal peptide is removed by LspA, modified by Lnt with amide-linked fatty acid (By similarity).</text>
</comment>
<keyword id="KW-1003">Cell membrane</keyword>
<keyword id="KW-0449">Lipoprotein</keyword>
<keyword id="KW-0472">Membrane</keyword>
<keyword id="KW-0564">Palmitate</keyword>
<keyword id="KW-1185">Reference proteome</keyword>
<keyword id="KW-0732">Signal</keyword>
<keyword id="KW-0812">Transmembrane</keyword>
<keyword id="KW-1133">Transmembrane helix</keyword>
<organism>
    <name type="scientific">Mycobacterium tuberculosis (strain ATCC 25618 / H37Rv)</name>
    <dbReference type="NCBI Taxonomy" id="83332"/>
    <lineage>
        <taxon>Bacteria</taxon>
        <taxon>Bacillati</taxon>
        <taxon>Actinomycetota</taxon>
        <taxon>Actinomycetes</taxon>
        <taxon>Mycobacteriales</taxon>
        <taxon>Mycobacteriaceae</taxon>
        <taxon>Mycobacterium</taxon>
        <taxon>Mycobacterium tuberculosis complex</taxon>
    </lineage>
</organism>
<feature type="signal peptide" evidence="3">
    <location>
        <begin position="1"/>
        <end position="34"/>
    </location>
</feature>
<feature type="chain" id="PRO_0000434609" description="Putative lipoprotein LprJ" evidence="3">
    <location>
        <begin position="35"/>
        <end position="127"/>
    </location>
</feature>
<feature type="topological domain" description="Extracellular" evidence="6">
    <location>
        <begin position="35"/>
        <end position="99"/>
    </location>
</feature>
<feature type="transmembrane region" description="Helical" evidence="2">
    <location>
        <begin position="100"/>
        <end position="120"/>
    </location>
</feature>
<feature type="topological domain" description="Cytoplasmic" evidence="6">
    <location>
        <begin position="121"/>
        <end position="127"/>
    </location>
</feature>
<feature type="lipid moiety-binding region" description="N-palmitoyl cysteine" evidence="3">
    <location>
        <position position="35"/>
    </location>
</feature>
<feature type="lipid moiety-binding region" description="S-diacylglycerol cysteine" evidence="3">
    <location>
        <position position="35"/>
    </location>
</feature>
<feature type="mutagenesis site" description="Increases KdpD induction at 0 and 250 uM K(+)." evidence="4">
    <original>NAG</original>
    <variation>SAS</variation>
    <location>
        <begin position="54"/>
        <end position="56"/>
    </location>
</feature>
<evidence type="ECO:0000250" key="1">
    <source>
        <dbReference type="UniProtKB" id="P9WK47"/>
    </source>
</evidence>
<evidence type="ECO:0000255" key="2"/>
<evidence type="ECO:0000255" key="3">
    <source>
        <dbReference type="PROSITE-ProRule" id="PRU00303"/>
    </source>
</evidence>
<evidence type="ECO:0000269" key="4">
    <source>
    </source>
</evidence>
<evidence type="ECO:0000305" key="5"/>
<evidence type="ECO:0000305" key="6">
    <source>
    </source>
</evidence>
<reference key="1">
    <citation type="journal article" date="1998" name="Nature">
        <title>Deciphering the biology of Mycobacterium tuberculosis from the complete genome sequence.</title>
        <authorList>
            <person name="Cole S.T."/>
            <person name="Brosch R."/>
            <person name="Parkhill J."/>
            <person name="Garnier T."/>
            <person name="Churcher C.M."/>
            <person name="Harris D.E."/>
            <person name="Gordon S.V."/>
            <person name="Eiglmeier K."/>
            <person name="Gas S."/>
            <person name="Barry C.E. III"/>
            <person name="Tekaia F."/>
            <person name="Badcock K."/>
            <person name="Basham D."/>
            <person name="Brown D."/>
            <person name="Chillingworth T."/>
            <person name="Connor R."/>
            <person name="Davies R.M."/>
            <person name="Devlin K."/>
            <person name="Feltwell T."/>
            <person name="Gentles S."/>
            <person name="Hamlin N."/>
            <person name="Holroyd S."/>
            <person name="Hornsby T."/>
            <person name="Jagels K."/>
            <person name="Krogh A."/>
            <person name="McLean J."/>
            <person name="Moule S."/>
            <person name="Murphy L.D."/>
            <person name="Oliver S."/>
            <person name="Osborne J."/>
            <person name="Quail M.A."/>
            <person name="Rajandream M.A."/>
            <person name="Rogers J."/>
            <person name="Rutter S."/>
            <person name="Seeger K."/>
            <person name="Skelton S."/>
            <person name="Squares S."/>
            <person name="Squares R."/>
            <person name="Sulston J.E."/>
            <person name="Taylor K."/>
            <person name="Whitehead S."/>
            <person name="Barrell B.G."/>
        </authorList>
    </citation>
    <scope>NUCLEOTIDE SEQUENCE [LARGE SCALE GENOMIC DNA]</scope>
    <source>
        <strain>ATCC 25618 / H37Rv</strain>
    </source>
</reference>
<reference key="2">
    <citation type="journal article" date="2003" name="Mol. Microbiol.">
        <title>Interaction of the sensor module of Mycobacterium tuberculosis H37Rv KdpD with members of the Lpr family.</title>
        <authorList>
            <person name="Steyn A.J."/>
            <person name="Joseph J."/>
            <person name="Bloom B.R."/>
        </authorList>
    </citation>
    <scope>FUNCTION</scope>
    <scope>POSSIBLE INTERACTION WITH KDPD</scope>
    <scope>TOPOLOGY</scope>
    <scope>MUTAGENESIS OF 54-ASN--GLY-56</scope>
    <source>
        <strain>ATCC 25618 / H37Rv</strain>
    </source>
</reference>
<gene>
    <name type="primary">lprJ</name>
    <name type="ordered locus">Rv1690</name>
</gene>
<sequence>MTAHTHDGTRTWRTGRQATTLLALLAGVFGGAASCAAPIQADMMGNAFLTALTNAGIAYDQPATTVALGRSVCPMVVAPGGTFESITSRMAEINGMSRDMASTFTIVAIGTYCPAVIAPLMPNRLQA</sequence>
<proteinExistence type="evidence at protein level"/>